<organism>
    <name type="scientific">Mycoplasma genitalium (strain ATCC 33530 / DSM 19775 / NCTC 10195 / G37)</name>
    <name type="common">Mycoplasmoides genitalium</name>
    <dbReference type="NCBI Taxonomy" id="243273"/>
    <lineage>
        <taxon>Bacteria</taxon>
        <taxon>Bacillati</taxon>
        <taxon>Mycoplasmatota</taxon>
        <taxon>Mycoplasmoidales</taxon>
        <taxon>Mycoplasmoidaceae</taxon>
        <taxon>Mycoplasmoides</taxon>
    </lineage>
</organism>
<sequence>MKNEIKYLYSDLDGTIVSWNPKTEFVYQNKSYKNFHEVSDATISAFYRLQQKGIKVGIVTGRDYCRVLWLEKQLRTGLPTITLDGAIIFYQNEILSQTYLDDRFIEGINNIVKRFPEAAYKLNSGWISYFTKNPSVIFEIDYAFLGYFNPNTKLQKKFIDSTENWDLNKLKVNQVYFDIDTCPLAMQKEIIELISVSDVNAKIYEHSMYIIKNGVSKASALQSLNQFAIPITKDNTIVCGDGDNDIEMMQWAKHSVSLIGSNPKCFALAKYHTDSVDNDGIANWIEKNLLC</sequence>
<keyword id="KW-0378">Hydrolase</keyword>
<keyword id="KW-0460">Magnesium</keyword>
<keyword id="KW-0479">Metal-binding</keyword>
<keyword id="KW-1185">Reference proteome</keyword>
<evidence type="ECO:0000250" key="1"/>
<evidence type="ECO:0000305" key="2"/>
<dbReference type="EC" id="3.1.3.-"/>
<dbReference type="EMBL" id="L43967">
    <property type="protein sequence ID" value="AAC71485.1"/>
    <property type="molecule type" value="Genomic_DNA"/>
</dbReference>
<dbReference type="EMBL" id="U01764">
    <property type="protein sequence ID" value="AAD10580.1"/>
    <property type="molecule type" value="Genomic_DNA"/>
</dbReference>
<dbReference type="PIR" id="A64229">
    <property type="entry name" value="A64229"/>
</dbReference>
<dbReference type="RefSeq" id="WP_009885894.1">
    <property type="nucleotide sequence ID" value="NC_000908.2"/>
</dbReference>
<dbReference type="SMR" id="P47505"/>
<dbReference type="STRING" id="243273.MG_263"/>
<dbReference type="GeneID" id="88282418"/>
<dbReference type="KEGG" id="mge:MG_263"/>
<dbReference type="eggNOG" id="COG0561">
    <property type="taxonomic scope" value="Bacteria"/>
</dbReference>
<dbReference type="HOGENOM" id="CLU_044146_0_3_14"/>
<dbReference type="InParanoid" id="P47505"/>
<dbReference type="OrthoDB" id="399211at2"/>
<dbReference type="BioCyc" id="MGEN243273:G1GJ2-319-MONOMER"/>
<dbReference type="Proteomes" id="UP000000807">
    <property type="component" value="Chromosome"/>
</dbReference>
<dbReference type="GO" id="GO:0005829">
    <property type="term" value="C:cytosol"/>
    <property type="evidence" value="ECO:0000318"/>
    <property type="project" value="GO_Central"/>
</dbReference>
<dbReference type="GO" id="GO:0000287">
    <property type="term" value="F:magnesium ion binding"/>
    <property type="evidence" value="ECO:0000318"/>
    <property type="project" value="GO_Central"/>
</dbReference>
<dbReference type="GO" id="GO:0016791">
    <property type="term" value="F:phosphatase activity"/>
    <property type="evidence" value="ECO:0000318"/>
    <property type="project" value="GO_Central"/>
</dbReference>
<dbReference type="Gene3D" id="3.30.1240.10">
    <property type="match status" value="1"/>
</dbReference>
<dbReference type="Gene3D" id="3.40.50.1000">
    <property type="entry name" value="HAD superfamily/HAD-like"/>
    <property type="match status" value="1"/>
</dbReference>
<dbReference type="InterPro" id="IPR000150">
    <property type="entry name" value="Cof"/>
</dbReference>
<dbReference type="InterPro" id="IPR036412">
    <property type="entry name" value="HAD-like_sf"/>
</dbReference>
<dbReference type="InterPro" id="IPR006379">
    <property type="entry name" value="HAD-SF_hydro_IIB"/>
</dbReference>
<dbReference type="InterPro" id="IPR023214">
    <property type="entry name" value="HAD_sf"/>
</dbReference>
<dbReference type="NCBIfam" id="TIGR00099">
    <property type="entry name" value="Cof-subfamily"/>
    <property type="match status" value="1"/>
</dbReference>
<dbReference type="NCBIfam" id="TIGR01484">
    <property type="entry name" value="HAD-SF-IIB"/>
    <property type="match status" value="1"/>
</dbReference>
<dbReference type="PANTHER" id="PTHR10000:SF8">
    <property type="entry name" value="HAD SUPERFAMILY HYDROLASE-LIKE, TYPE 3"/>
    <property type="match status" value="1"/>
</dbReference>
<dbReference type="PANTHER" id="PTHR10000">
    <property type="entry name" value="PHOSPHOSERINE PHOSPHATASE"/>
    <property type="match status" value="1"/>
</dbReference>
<dbReference type="Pfam" id="PF08282">
    <property type="entry name" value="Hydrolase_3"/>
    <property type="match status" value="1"/>
</dbReference>
<dbReference type="SUPFAM" id="SSF56784">
    <property type="entry name" value="HAD-like"/>
    <property type="match status" value="1"/>
</dbReference>
<dbReference type="PROSITE" id="PS01228">
    <property type="entry name" value="COF_1"/>
    <property type="match status" value="1"/>
</dbReference>
<dbReference type="PROSITE" id="PS01229">
    <property type="entry name" value="COF_2"/>
    <property type="match status" value="1"/>
</dbReference>
<name>Y263_MYCGE</name>
<protein>
    <recommendedName>
        <fullName>Putative phosphatase MG263</fullName>
        <ecNumber>3.1.3.-</ecNumber>
    </recommendedName>
</protein>
<reference key="1">
    <citation type="journal article" date="1995" name="Science">
        <title>The minimal gene complement of Mycoplasma genitalium.</title>
        <authorList>
            <person name="Fraser C.M."/>
            <person name="Gocayne J.D."/>
            <person name="White O."/>
            <person name="Adams M.D."/>
            <person name="Clayton R.A."/>
            <person name="Fleischmann R.D."/>
            <person name="Bult C.J."/>
            <person name="Kerlavage A.R."/>
            <person name="Sutton G.G."/>
            <person name="Kelley J.M."/>
            <person name="Fritchman J.L."/>
            <person name="Weidman J.F."/>
            <person name="Small K.V."/>
            <person name="Sandusky M."/>
            <person name="Fuhrmann J.L."/>
            <person name="Nguyen D.T."/>
            <person name="Utterback T.R."/>
            <person name="Saudek D.M."/>
            <person name="Phillips C.A."/>
            <person name="Merrick J.M."/>
            <person name="Tomb J.-F."/>
            <person name="Dougherty B.A."/>
            <person name="Bott K.F."/>
            <person name="Hu P.-C."/>
            <person name="Lucier T.S."/>
            <person name="Peterson S.N."/>
            <person name="Smith H.O."/>
            <person name="Hutchison C.A. III"/>
            <person name="Venter J.C."/>
        </authorList>
    </citation>
    <scope>NUCLEOTIDE SEQUENCE [LARGE SCALE GENOMIC DNA]</scope>
    <source>
        <strain>ATCC 33530 / DSM 19775 / NCTC 10195 / G37</strain>
    </source>
</reference>
<reference key="2">
    <citation type="journal article" date="1993" name="J. Bacteriol.">
        <title>A survey of the Mycoplasma genitalium genome by using random sequencing.</title>
        <authorList>
            <person name="Peterson S.N."/>
            <person name="Hu P.-C."/>
            <person name="Bott K.F."/>
            <person name="Hutchison C.A. III"/>
        </authorList>
    </citation>
    <scope>NUCLEOTIDE SEQUENCE [GENOMIC DNA] OF 164-276</scope>
    <source>
        <strain>ATCC 33530 / DSM 19775 / NCTC 10195 / G37</strain>
    </source>
</reference>
<comment type="cofactor">
    <cofactor evidence="1">
        <name>Mg(2+)</name>
        <dbReference type="ChEBI" id="CHEBI:18420"/>
    </cofactor>
</comment>
<comment type="similarity">
    <text evidence="2">Belongs to the HAD-like hydrolase superfamily. Cof family.</text>
</comment>
<proteinExistence type="inferred from homology"/>
<feature type="chain" id="PRO_0000054437" description="Putative phosphatase MG263">
    <location>
        <begin position="1"/>
        <end position="291"/>
    </location>
</feature>
<feature type="active site" description="Nucleophile" evidence="1">
    <location>
        <position position="11"/>
    </location>
</feature>
<feature type="binding site" evidence="1">
    <location>
        <position position="11"/>
    </location>
    <ligand>
        <name>Mg(2+)</name>
        <dbReference type="ChEBI" id="CHEBI:18420"/>
    </ligand>
</feature>
<feature type="binding site" evidence="1">
    <location>
        <position position="12"/>
    </location>
    <ligand>
        <name>phosphate</name>
        <dbReference type="ChEBI" id="CHEBI:43474"/>
    </ligand>
</feature>
<feature type="binding site" evidence="1">
    <location>
        <position position="13"/>
    </location>
    <ligand>
        <name>Mg(2+)</name>
        <dbReference type="ChEBI" id="CHEBI:18420"/>
    </ligand>
</feature>
<feature type="binding site" evidence="1">
    <location>
        <begin position="60"/>
        <end position="61"/>
    </location>
    <ligand>
        <name>phosphate</name>
        <dbReference type="ChEBI" id="CHEBI:43474"/>
    </ligand>
</feature>
<feature type="binding site" evidence="1">
    <location>
        <position position="217"/>
    </location>
    <ligand>
        <name>phosphate</name>
        <dbReference type="ChEBI" id="CHEBI:43474"/>
    </ligand>
</feature>
<feature type="binding site" evidence="1">
    <location>
        <position position="241"/>
    </location>
    <ligand>
        <name>Mg(2+)</name>
        <dbReference type="ChEBI" id="CHEBI:18420"/>
    </ligand>
</feature>
<feature type="binding site" evidence="1">
    <location>
        <position position="244"/>
    </location>
    <ligand>
        <name>phosphate</name>
        <dbReference type="ChEBI" id="CHEBI:43474"/>
    </ligand>
</feature>
<feature type="sequence conflict" description="In Ref. 2; AAD10580." evidence="2" ref="2">
    <original>L</original>
    <variation>S</variation>
    <location>
        <position position="170"/>
    </location>
</feature>
<feature type="sequence conflict" description="In Ref. 2; AAD10580." evidence="2" ref="2">
    <original>I</original>
    <variation>R</variation>
    <location>
        <position position="190"/>
    </location>
</feature>
<gene>
    <name type="ordered locus">MG263</name>
</gene>
<accession>P47505</accession>
<accession>Q49216</accession>